<protein>
    <recommendedName>
        <fullName>Chaperone protein DnaK</fullName>
    </recommendedName>
    <alternativeName>
        <fullName>HSP70</fullName>
    </alternativeName>
    <alternativeName>
        <fullName>Heat shock 70 kDa protein</fullName>
    </alternativeName>
    <alternativeName>
        <fullName>Heat shock protein 70</fullName>
    </alternativeName>
</protein>
<comment type="function">
    <text evidence="1">Acts as a chaperone.</text>
</comment>
<comment type="induction">
    <text evidence="1">By stress conditions e.g. heat shock (By similarity).</text>
</comment>
<comment type="similarity">
    <text evidence="4">Belongs to the heat shock protein 70 family.</text>
</comment>
<keyword id="KW-0067">ATP-binding</keyword>
<keyword id="KW-0143">Chaperone</keyword>
<keyword id="KW-0903">Direct protein sequencing</keyword>
<keyword id="KW-0547">Nucleotide-binding</keyword>
<keyword id="KW-0597">Phosphoprotein</keyword>
<keyword id="KW-1185">Reference proteome</keyword>
<keyword id="KW-0346">Stress response</keyword>
<evidence type="ECO:0000250" key="1"/>
<evidence type="ECO:0000256" key="2">
    <source>
        <dbReference type="SAM" id="MobiDB-lite"/>
    </source>
</evidence>
<evidence type="ECO:0000269" key="3">
    <source>
    </source>
</evidence>
<evidence type="ECO:0000305" key="4"/>
<organism>
    <name type="scientific">Deinococcus radiodurans (strain ATCC 13939 / DSM 20539 / JCM 16871 / CCUG 27074 / LMG 4051 / NBRC 15346 / NCIMB 9279 / VKM B-1422 / R1)</name>
    <dbReference type="NCBI Taxonomy" id="243230"/>
    <lineage>
        <taxon>Bacteria</taxon>
        <taxon>Thermotogati</taxon>
        <taxon>Deinococcota</taxon>
        <taxon>Deinococci</taxon>
        <taxon>Deinococcales</taxon>
        <taxon>Deinococcaceae</taxon>
        <taxon>Deinococcus</taxon>
    </lineage>
</organism>
<dbReference type="EMBL" id="AE000513">
    <property type="protein sequence ID" value="AAF09718.1"/>
    <property type="molecule type" value="Genomic_DNA"/>
</dbReference>
<dbReference type="PIR" id="A75557">
    <property type="entry name" value="A75557"/>
</dbReference>
<dbReference type="RefSeq" id="NP_293855.1">
    <property type="nucleotide sequence ID" value="NC_001263.1"/>
</dbReference>
<dbReference type="RefSeq" id="WP_010886777.1">
    <property type="nucleotide sequence ID" value="NC_001263.1"/>
</dbReference>
<dbReference type="SMR" id="Q9RY23"/>
<dbReference type="FunCoup" id="Q9RY23">
    <property type="interactions" value="469"/>
</dbReference>
<dbReference type="STRING" id="243230.DR_0129"/>
<dbReference type="PaxDb" id="243230-DR_0129"/>
<dbReference type="EnsemblBacteria" id="AAF09718">
    <property type="protein sequence ID" value="AAF09718"/>
    <property type="gene ID" value="DR_0129"/>
</dbReference>
<dbReference type="GeneID" id="69516359"/>
<dbReference type="KEGG" id="dra:DR_0129"/>
<dbReference type="PATRIC" id="fig|243230.17.peg.293"/>
<dbReference type="eggNOG" id="COG0443">
    <property type="taxonomic scope" value="Bacteria"/>
</dbReference>
<dbReference type="HOGENOM" id="CLU_005965_2_1_0"/>
<dbReference type="InParanoid" id="Q9RY23"/>
<dbReference type="OrthoDB" id="9766019at2"/>
<dbReference type="Proteomes" id="UP000002524">
    <property type="component" value="Chromosome 1"/>
</dbReference>
<dbReference type="GO" id="GO:0005524">
    <property type="term" value="F:ATP binding"/>
    <property type="evidence" value="ECO:0007669"/>
    <property type="project" value="UniProtKB-UniRule"/>
</dbReference>
<dbReference type="GO" id="GO:0016887">
    <property type="term" value="F:ATP hydrolysis activity"/>
    <property type="evidence" value="ECO:0000318"/>
    <property type="project" value="GO_Central"/>
</dbReference>
<dbReference type="GO" id="GO:0140662">
    <property type="term" value="F:ATP-dependent protein folding chaperone"/>
    <property type="evidence" value="ECO:0007669"/>
    <property type="project" value="InterPro"/>
</dbReference>
<dbReference type="GO" id="GO:0031072">
    <property type="term" value="F:heat shock protein binding"/>
    <property type="evidence" value="ECO:0000318"/>
    <property type="project" value="GO_Central"/>
</dbReference>
<dbReference type="GO" id="GO:0044183">
    <property type="term" value="F:protein folding chaperone"/>
    <property type="evidence" value="ECO:0000318"/>
    <property type="project" value="GO_Central"/>
</dbReference>
<dbReference type="GO" id="GO:0051082">
    <property type="term" value="F:unfolded protein binding"/>
    <property type="evidence" value="ECO:0007669"/>
    <property type="project" value="InterPro"/>
</dbReference>
<dbReference type="GO" id="GO:0051085">
    <property type="term" value="P:chaperone cofactor-dependent protein refolding"/>
    <property type="evidence" value="ECO:0000318"/>
    <property type="project" value="GO_Central"/>
</dbReference>
<dbReference type="GO" id="GO:0042026">
    <property type="term" value="P:protein refolding"/>
    <property type="evidence" value="ECO:0000318"/>
    <property type="project" value="GO_Central"/>
</dbReference>
<dbReference type="CDD" id="cd10234">
    <property type="entry name" value="ASKHA_NBD_HSP70_DnaK-like"/>
    <property type="match status" value="1"/>
</dbReference>
<dbReference type="FunFam" id="2.60.34.10:FF:000014">
    <property type="entry name" value="Chaperone protein DnaK HSP70"/>
    <property type="match status" value="1"/>
</dbReference>
<dbReference type="FunFam" id="3.30.420.40:FF:000004">
    <property type="entry name" value="Molecular chaperone DnaK"/>
    <property type="match status" value="1"/>
</dbReference>
<dbReference type="FunFam" id="3.90.640.10:FF:000003">
    <property type="entry name" value="Molecular chaperone DnaK"/>
    <property type="match status" value="1"/>
</dbReference>
<dbReference type="Gene3D" id="3.30.420.40">
    <property type="match status" value="2"/>
</dbReference>
<dbReference type="Gene3D" id="3.90.640.10">
    <property type="entry name" value="Actin, Chain A, domain 4"/>
    <property type="match status" value="1"/>
</dbReference>
<dbReference type="Gene3D" id="2.60.34.10">
    <property type="entry name" value="Substrate Binding Domain Of DNAk, Chain A, domain 1"/>
    <property type="match status" value="1"/>
</dbReference>
<dbReference type="HAMAP" id="MF_00332">
    <property type="entry name" value="DnaK"/>
    <property type="match status" value="1"/>
</dbReference>
<dbReference type="InterPro" id="IPR043129">
    <property type="entry name" value="ATPase_NBD"/>
</dbReference>
<dbReference type="InterPro" id="IPR012725">
    <property type="entry name" value="Chaperone_DnaK"/>
</dbReference>
<dbReference type="InterPro" id="IPR018181">
    <property type="entry name" value="Heat_shock_70_CS"/>
</dbReference>
<dbReference type="InterPro" id="IPR029047">
    <property type="entry name" value="HSP70_peptide-bd_sf"/>
</dbReference>
<dbReference type="InterPro" id="IPR013126">
    <property type="entry name" value="Hsp_70_fam"/>
</dbReference>
<dbReference type="NCBIfam" id="NF001413">
    <property type="entry name" value="PRK00290.1"/>
    <property type="match status" value="1"/>
</dbReference>
<dbReference type="NCBIfam" id="TIGR02350">
    <property type="entry name" value="prok_dnaK"/>
    <property type="match status" value="1"/>
</dbReference>
<dbReference type="PANTHER" id="PTHR19375">
    <property type="entry name" value="HEAT SHOCK PROTEIN 70KDA"/>
    <property type="match status" value="1"/>
</dbReference>
<dbReference type="Pfam" id="PF00012">
    <property type="entry name" value="HSP70"/>
    <property type="match status" value="1"/>
</dbReference>
<dbReference type="PRINTS" id="PR00301">
    <property type="entry name" value="HEATSHOCK70"/>
</dbReference>
<dbReference type="SUPFAM" id="SSF53067">
    <property type="entry name" value="Actin-like ATPase domain"/>
    <property type="match status" value="2"/>
</dbReference>
<dbReference type="SUPFAM" id="SSF100920">
    <property type="entry name" value="Heat shock protein 70kD (HSP70), peptide-binding domain"/>
    <property type="match status" value="1"/>
</dbReference>
<dbReference type="PROSITE" id="PS00297">
    <property type="entry name" value="HSP70_1"/>
    <property type="match status" value="1"/>
</dbReference>
<dbReference type="PROSITE" id="PS00329">
    <property type="entry name" value="HSP70_2"/>
    <property type="match status" value="1"/>
</dbReference>
<dbReference type="PROSITE" id="PS01036">
    <property type="entry name" value="HSP70_3"/>
    <property type="match status" value="1"/>
</dbReference>
<reference key="1">
    <citation type="journal article" date="1999" name="Science">
        <title>Genome sequence of the radioresistant bacterium Deinococcus radiodurans R1.</title>
        <authorList>
            <person name="White O."/>
            <person name="Eisen J.A."/>
            <person name="Heidelberg J.F."/>
            <person name="Hickey E.K."/>
            <person name="Peterson J.D."/>
            <person name="Dodson R.J."/>
            <person name="Haft D.H."/>
            <person name="Gwinn M.L."/>
            <person name="Nelson W.C."/>
            <person name="Richardson D.L."/>
            <person name="Moffat K.S."/>
            <person name="Qin H."/>
            <person name="Jiang L."/>
            <person name="Pamphile W."/>
            <person name="Crosby M."/>
            <person name="Shen M."/>
            <person name="Vamathevan J.J."/>
            <person name="Lam P."/>
            <person name="McDonald L.A."/>
            <person name="Utterback T.R."/>
            <person name="Zalewski C."/>
            <person name="Makarova K.S."/>
            <person name="Aravind L."/>
            <person name="Daly M.J."/>
            <person name="Minton K.W."/>
            <person name="Fleischmann R.D."/>
            <person name="Ketchum K.A."/>
            <person name="Nelson K.E."/>
            <person name="Salzberg S.L."/>
            <person name="Smith H.O."/>
            <person name="Venter J.C."/>
            <person name="Fraser C.M."/>
        </authorList>
    </citation>
    <scope>NUCLEOTIDE SEQUENCE [LARGE SCALE GENOMIC DNA]</scope>
    <source>
        <strain>ATCC 13939 / DSM 20539 / JCM 16871 / CCUG 27074 / LMG 4051 / NBRC 15346 / NCIMB 9279 / VKM B-1422 / R1</strain>
    </source>
</reference>
<reference key="2">
    <citation type="journal article" date="2004" name="Biochem. Biophys. Res. Commun.">
        <title>Protein recycling is a major component of post-irradiation recovery in Deinococcus radiodurans strain R1.</title>
        <authorList>
            <person name="Joshi B.S."/>
            <person name="Schmid R."/>
            <person name="Altendorf K."/>
            <person name="Apte S.K."/>
        </authorList>
    </citation>
    <scope>PROTEIN SEQUENCE OF 2-20</scope>
    <source>
        <strain>ATCC 13939 / DSM 20539 / JCM 16871 / CCUG 27074 / LMG 4051 / NBRC 15346 / NCIMB 9279 / VKM B-1422 / R1</strain>
    </source>
</reference>
<sequence>MAKAVGIDLGTTNSVIAVMEGGRPEVIVNAEGGRTTPSVVAYKGDEILVGQIARRQAALNPAATLFEVKRFIGRRWDEVKEEAARSPFTVKEGPSGSVRIEVNGKDLAPEQVSAEVLRKLVSDASAKLGNKITDAVITVPAYFDNSQREATRQAGEIAGLNVLRVINEPTAAALAYGLERKGNETVLVFDLGGGTFDVTILELGDGVFEVKSTAGDTHLGGADFDYRIVDWLAGEFQKEHNFDLRKDKQALQRLIEAAEKAKIDLSNASETSISLPFITFDPETRTPMHLERSLSRAKFEELTADLLRRVRQPVEQALSDAKLSAGDINEVILVGGSTRIPAVKRIVQDLVGKTPNESVNPDEAVALGAAVQAGIIQGDSSLGDIVLVDVTPLTLGVEVKGGMIAPMITRNTTVPAKKTEIYTTAENNQPGVEINVLQGERPMAADNKSLGRFKLEGIPPMPAGRAQIEVTFDIDANGILHVTAKEKTSGKESSITIENTTTLDKTDVERMVQEAEQNAAADKQRKEKVEKRNNLDSLRVQAVQQLEEQEGAAQDAKDRLKAAADEAEEAVRSEDDSKIADAQKKLEEELRSFMTANQASTQGQPEGTQAQANKADDDVIDADFKPAE</sequence>
<gene>
    <name type="primary">dnaK</name>
    <name type="ordered locus">DR_0129</name>
</gene>
<name>DNAK_DEIRA</name>
<feature type="initiator methionine" description="Removed" evidence="3">
    <location>
        <position position="1"/>
    </location>
</feature>
<feature type="chain" id="PRO_0000078457" description="Chaperone protein DnaK">
    <location>
        <begin position="2"/>
        <end position="628"/>
    </location>
</feature>
<feature type="region of interest" description="Disordered" evidence="2">
    <location>
        <begin position="547"/>
        <end position="628"/>
    </location>
</feature>
<feature type="compositionally biased region" description="Basic and acidic residues" evidence="2">
    <location>
        <begin position="555"/>
        <end position="591"/>
    </location>
</feature>
<feature type="compositionally biased region" description="Polar residues" evidence="2">
    <location>
        <begin position="594"/>
        <end position="612"/>
    </location>
</feature>
<feature type="compositionally biased region" description="Basic and acidic residues" evidence="2">
    <location>
        <begin position="614"/>
        <end position="628"/>
    </location>
</feature>
<feature type="modified residue" description="Phosphothreonine; by autocatalysis" evidence="1">
    <location>
        <position position="195"/>
    </location>
</feature>
<accession>Q9RY23</accession>
<proteinExistence type="evidence at protein level"/>